<reference key="1">
    <citation type="journal article" date="2006" name="Proc. Natl. Acad. Sci. U.S.A.">
        <title>The complete genome of Rhodococcus sp. RHA1 provides insights into a catabolic powerhouse.</title>
        <authorList>
            <person name="McLeod M.P."/>
            <person name="Warren R.L."/>
            <person name="Hsiao W.W.L."/>
            <person name="Araki N."/>
            <person name="Myhre M."/>
            <person name="Fernandes C."/>
            <person name="Miyazawa D."/>
            <person name="Wong W."/>
            <person name="Lillquist A.L."/>
            <person name="Wang D."/>
            <person name="Dosanjh M."/>
            <person name="Hara H."/>
            <person name="Petrescu A."/>
            <person name="Morin R.D."/>
            <person name="Yang G."/>
            <person name="Stott J.M."/>
            <person name="Schein J.E."/>
            <person name="Shin H."/>
            <person name="Smailus D."/>
            <person name="Siddiqui A.S."/>
            <person name="Marra M.A."/>
            <person name="Jones S.J.M."/>
            <person name="Holt R."/>
            <person name="Brinkman F.S.L."/>
            <person name="Miyauchi K."/>
            <person name="Fukuda M."/>
            <person name="Davies J.E."/>
            <person name="Mohn W.W."/>
            <person name="Eltis L.D."/>
        </authorList>
    </citation>
    <scope>NUCLEOTIDE SEQUENCE [LARGE SCALE GENOMIC DNA]</scope>
    <source>
        <strain>RHA1</strain>
    </source>
</reference>
<gene>
    <name evidence="1" type="primary">fbiD</name>
    <name type="ordered locus">RHA1_ro11040</name>
</gene>
<protein>
    <recommendedName>
        <fullName evidence="1">Phosphoenolpyruvate guanylyltransferase 2</fullName>
        <shortName evidence="1">PEP guanylyltransferase 2</shortName>
        <ecNumber evidence="1">2.7.7.105</ecNumber>
    </recommendedName>
</protein>
<feature type="chain" id="PRO_0000398708" description="Phosphoenolpyruvate guanylyltransferase 2">
    <location>
        <begin position="1"/>
        <end position="214"/>
    </location>
</feature>
<feature type="binding site" evidence="1">
    <location>
        <position position="135"/>
    </location>
    <ligand>
        <name>phosphoenolpyruvate</name>
        <dbReference type="ChEBI" id="CHEBI:58702"/>
    </ligand>
</feature>
<feature type="binding site" evidence="1">
    <location>
        <position position="150"/>
    </location>
    <ligand>
        <name>phosphoenolpyruvate</name>
        <dbReference type="ChEBI" id="CHEBI:58702"/>
    </ligand>
</feature>
<feature type="binding site" evidence="1">
    <location>
        <position position="153"/>
    </location>
    <ligand>
        <name>phosphoenolpyruvate</name>
        <dbReference type="ChEBI" id="CHEBI:58702"/>
    </ligand>
</feature>
<evidence type="ECO:0000255" key="1">
    <source>
        <dbReference type="HAMAP-Rule" id="MF_02114"/>
    </source>
</evidence>
<sequence>MSDYGEWAVIVPFRSLDVAKSRLAVSCRRDLALAFLQDTLAALTLSNHISSVIVVSRNAALSETIGTPVIKDQGSGIDDAVEIGHRWLREHGHDGHYSVVMPDLPALRTGDIDNFLSAASRFPRAFVADSAGTGTTCLTTQQAAILSAFGRNSAQRHTRMGYKQIPLGLPSLRLDVDTIDDLERAARMGVGRHTQRLLISNNELHSLRFPCAPG</sequence>
<keyword id="KW-0342">GTP-binding</keyword>
<keyword id="KW-0547">Nucleotide-binding</keyword>
<keyword id="KW-0548">Nucleotidyltransferase</keyword>
<keyword id="KW-0614">Plasmid</keyword>
<keyword id="KW-0808">Transferase</keyword>
<name>FBID2_RHOJR</name>
<geneLocation type="plasmid">
    <name>pRHL3</name>
</geneLocation>
<comment type="function">
    <text evidence="1">Guanylyltransferase that catalyzes the activation of phosphoenolpyruvate (PEP) as enolpyruvoyl-2-diphospho-5'-guanosine, via the condensation of PEP with GTP. It is involved in the biosynthesis of coenzyme F420, a hydride carrier cofactor.</text>
</comment>
<comment type="catalytic activity">
    <reaction evidence="1">
        <text>phosphoenolpyruvate + GTP + H(+) = enolpyruvoyl-2-diphospho-5'-guanosine + diphosphate</text>
        <dbReference type="Rhea" id="RHEA:30519"/>
        <dbReference type="ChEBI" id="CHEBI:15378"/>
        <dbReference type="ChEBI" id="CHEBI:33019"/>
        <dbReference type="ChEBI" id="CHEBI:37565"/>
        <dbReference type="ChEBI" id="CHEBI:58702"/>
        <dbReference type="ChEBI" id="CHEBI:143701"/>
        <dbReference type="EC" id="2.7.7.105"/>
    </reaction>
</comment>
<comment type="pathway">
    <text evidence="1">Cofactor biosynthesis; coenzyme F420 biosynthesis.</text>
</comment>
<comment type="similarity">
    <text evidence="1">Belongs to the CofC family.</text>
</comment>
<dbReference type="EC" id="2.7.7.105" evidence="1"/>
<dbReference type="EMBL" id="CP000434">
    <property type="protein sequence ID" value="ABH00687.1"/>
    <property type="molecule type" value="Genomic_DNA"/>
</dbReference>
<dbReference type="RefSeq" id="WP_011600315.1">
    <property type="nucleotide sequence ID" value="NC_008271.1"/>
</dbReference>
<dbReference type="SMR" id="Q0RVJ9"/>
<dbReference type="KEGG" id="rha:RHA1_ro11040"/>
<dbReference type="eggNOG" id="COG1920">
    <property type="taxonomic scope" value="Bacteria"/>
</dbReference>
<dbReference type="HOGENOM" id="CLU_076569_0_0_11"/>
<dbReference type="OrthoDB" id="9151145at2"/>
<dbReference type="UniPathway" id="UPA00071"/>
<dbReference type="Proteomes" id="UP000008710">
    <property type="component" value="Plasmid pRHL3"/>
</dbReference>
<dbReference type="GO" id="GO:0005525">
    <property type="term" value="F:GTP binding"/>
    <property type="evidence" value="ECO:0007669"/>
    <property type="project" value="UniProtKB-KW"/>
</dbReference>
<dbReference type="GO" id="GO:0043814">
    <property type="term" value="F:phospholactate guanylyltransferase activity"/>
    <property type="evidence" value="ECO:0007669"/>
    <property type="project" value="InterPro"/>
</dbReference>
<dbReference type="GO" id="GO:0052645">
    <property type="term" value="P:F420-0 metabolic process"/>
    <property type="evidence" value="ECO:0007669"/>
    <property type="project" value="UniProtKB-UniRule"/>
</dbReference>
<dbReference type="Gene3D" id="3.90.550.10">
    <property type="entry name" value="Spore Coat Polysaccharide Biosynthesis Protein SpsA, Chain A"/>
    <property type="match status" value="1"/>
</dbReference>
<dbReference type="HAMAP" id="MF_02114">
    <property type="entry name" value="CofC"/>
    <property type="match status" value="1"/>
</dbReference>
<dbReference type="InterPro" id="IPR002835">
    <property type="entry name" value="CofC"/>
</dbReference>
<dbReference type="InterPro" id="IPR029044">
    <property type="entry name" value="Nucleotide-diphossugar_trans"/>
</dbReference>
<dbReference type="NCBIfam" id="TIGR03552">
    <property type="entry name" value="F420_cofC"/>
    <property type="match status" value="1"/>
</dbReference>
<dbReference type="PANTHER" id="PTHR40392">
    <property type="entry name" value="2-PHOSPHO-L-LACTATE GUANYLYLTRANSFERASE"/>
    <property type="match status" value="1"/>
</dbReference>
<dbReference type="PANTHER" id="PTHR40392:SF1">
    <property type="entry name" value="2-PHOSPHO-L-LACTATE GUANYLYLTRANSFERASE"/>
    <property type="match status" value="1"/>
</dbReference>
<dbReference type="Pfam" id="PF01983">
    <property type="entry name" value="CofC"/>
    <property type="match status" value="1"/>
</dbReference>
<dbReference type="SUPFAM" id="SSF53448">
    <property type="entry name" value="Nucleotide-diphospho-sugar transferases"/>
    <property type="match status" value="1"/>
</dbReference>
<accession>Q0RVJ9</accession>
<proteinExistence type="inferred from homology"/>
<organism>
    <name type="scientific">Rhodococcus jostii (strain RHA1)</name>
    <dbReference type="NCBI Taxonomy" id="101510"/>
    <lineage>
        <taxon>Bacteria</taxon>
        <taxon>Bacillati</taxon>
        <taxon>Actinomycetota</taxon>
        <taxon>Actinomycetes</taxon>
        <taxon>Mycobacteriales</taxon>
        <taxon>Nocardiaceae</taxon>
        <taxon>Rhodococcus</taxon>
    </lineage>
</organism>